<reference key="1">
    <citation type="journal article" date="2009" name="Appl. Environ. Microbiol.">
        <title>Genome analysis of the meat starter culture bacterium Staphylococcus carnosus TM300.</title>
        <authorList>
            <person name="Rosenstein R."/>
            <person name="Nerz C."/>
            <person name="Biswas L."/>
            <person name="Resch A."/>
            <person name="Raddatz G."/>
            <person name="Schuster S.C."/>
            <person name="Goetz F."/>
        </authorList>
    </citation>
    <scope>NUCLEOTIDE SEQUENCE [LARGE SCALE GENOMIC DNA]</scope>
    <source>
        <strain>TM300</strain>
    </source>
</reference>
<accession>B9DNK2</accession>
<comment type="function">
    <text evidence="1">Negative regulator of class I heat shock genes (grpE-dnaK-dnaJ and groELS operons). Prevents heat-shock induction of these operons.</text>
</comment>
<comment type="similarity">
    <text evidence="1">Belongs to the HrcA family.</text>
</comment>
<proteinExistence type="inferred from homology"/>
<sequence length="322" mass="36633">MITNRQQSILNAIVEDYVDYGLPVGSKTVIERHQVNVSPATIRNEMKILEGMGLIEKAHASSGRSPSIKGFRYYVDQLLENTSPRTEFNNQRLNKLLADYNYNLSNALSVYANELSMSTKYTTLIMKPNQSKDLITDVHLFNTVAHLVIMVIVFESGNVEHLQLAVPEKISKNRLVQIANYIKSIFNADMRNDFSDETFMHSNDYLIVNQLIDLLNQRLNDITTDIFFGGKANLIDTLNEQNVNSIQQILQYLESNKILKLFEDDNHSGIDVKIGQEIDNGLEDISIILSDYHIDNHLKGHVAVIGPTAMRYQNVIQLLYKV</sequence>
<protein>
    <recommendedName>
        <fullName evidence="1">Heat-inducible transcription repressor HrcA</fullName>
    </recommendedName>
</protein>
<keyword id="KW-1185">Reference proteome</keyword>
<keyword id="KW-0678">Repressor</keyword>
<keyword id="KW-0346">Stress response</keyword>
<keyword id="KW-0804">Transcription</keyword>
<keyword id="KW-0805">Transcription regulation</keyword>
<feature type="chain" id="PRO_1000118315" description="Heat-inducible transcription repressor HrcA">
    <location>
        <begin position="1"/>
        <end position="322"/>
    </location>
</feature>
<gene>
    <name evidence="1" type="primary">hrcA</name>
    <name type="ordered locus">Sca_1204</name>
</gene>
<evidence type="ECO:0000255" key="1">
    <source>
        <dbReference type="HAMAP-Rule" id="MF_00081"/>
    </source>
</evidence>
<organism>
    <name type="scientific">Staphylococcus carnosus (strain TM300)</name>
    <dbReference type="NCBI Taxonomy" id="396513"/>
    <lineage>
        <taxon>Bacteria</taxon>
        <taxon>Bacillati</taxon>
        <taxon>Bacillota</taxon>
        <taxon>Bacilli</taxon>
        <taxon>Bacillales</taxon>
        <taxon>Staphylococcaceae</taxon>
        <taxon>Staphylococcus</taxon>
    </lineage>
</organism>
<dbReference type="EMBL" id="AM295250">
    <property type="protein sequence ID" value="CAL28111.1"/>
    <property type="molecule type" value="Genomic_DNA"/>
</dbReference>
<dbReference type="RefSeq" id="WP_015900451.1">
    <property type="nucleotide sequence ID" value="NC_012121.1"/>
</dbReference>
<dbReference type="SMR" id="B9DNK2"/>
<dbReference type="GeneID" id="93793629"/>
<dbReference type="KEGG" id="sca:SCA_1204"/>
<dbReference type="eggNOG" id="COG1420">
    <property type="taxonomic scope" value="Bacteria"/>
</dbReference>
<dbReference type="HOGENOM" id="CLU_050019_1_0_9"/>
<dbReference type="OrthoDB" id="9783139at2"/>
<dbReference type="BioCyc" id="SCAR396513:SCA_RS06030-MONOMER"/>
<dbReference type="Proteomes" id="UP000000444">
    <property type="component" value="Chromosome"/>
</dbReference>
<dbReference type="GO" id="GO:0003677">
    <property type="term" value="F:DNA binding"/>
    <property type="evidence" value="ECO:0007669"/>
    <property type="project" value="InterPro"/>
</dbReference>
<dbReference type="GO" id="GO:0045892">
    <property type="term" value="P:negative regulation of DNA-templated transcription"/>
    <property type="evidence" value="ECO:0007669"/>
    <property type="project" value="UniProtKB-UniRule"/>
</dbReference>
<dbReference type="Gene3D" id="3.30.450.40">
    <property type="match status" value="1"/>
</dbReference>
<dbReference type="Gene3D" id="3.30.390.60">
    <property type="entry name" value="Heat-inducible transcription repressor hrca homolog, domain 3"/>
    <property type="match status" value="1"/>
</dbReference>
<dbReference type="Gene3D" id="1.10.10.10">
    <property type="entry name" value="Winged helix-like DNA-binding domain superfamily/Winged helix DNA-binding domain"/>
    <property type="match status" value="1"/>
</dbReference>
<dbReference type="HAMAP" id="MF_00081">
    <property type="entry name" value="HrcA"/>
    <property type="match status" value="1"/>
</dbReference>
<dbReference type="InterPro" id="IPR029016">
    <property type="entry name" value="GAF-like_dom_sf"/>
</dbReference>
<dbReference type="InterPro" id="IPR002571">
    <property type="entry name" value="HrcA"/>
</dbReference>
<dbReference type="InterPro" id="IPR021153">
    <property type="entry name" value="HrcA_C"/>
</dbReference>
<dbReference type="InterPro" id="IPR036388">
    <property type="entry name" value="WH-like_DNA-bd_sf"/>
</dbReference>
<dbReference type="InterPro" id="IPR036390">
    <property type="entry name" value="WH_DNA-bd_sf"/>
</dbReference>
<dbReference type="InterPro" id="IPR005104">
    <property type="entry name" value="WHTH_HrcA_DNA-bd"/>
</dbReference>
<dbReference type="InterPro" id="IPR023120">
    <property type="entry name" value="WHTH_transcript_rep_HrcA_IDD"/>
</dbReference>
<dbReference type="NCBIfam" id="TIGR00331">
    <property type="entry name" value="hrcA"/>
    <property type="match status" value="1"/>
</dbReference>
<dbReference type="PANTHER" id="PTHR34824">
    <property type="entry name" value="HEAT-INDUCIBLE TRANSCRIPTION REPRESSOR HRCA"/>
    <property type="match status" value="1"/>
</dbReference>
<dbReference type="PANTHER" id="PTHR34824:SF1">
    <property type="entry name" value="HEAT-INDUCIBLE TRANSCRIPTION REPRESSOR HRCA"/>
    <property type="match status" value="1"/>
</dbReference>
<dbReference type="Pfam" id="PF01628">
    <property type="entry name" value="HrcA"/>
    <property type="match status" value="1"/>
</dbReference>
<dbReference type="Pfam" id="PF03444">
    <property type="entry name" value="HrcA_DNA-bdg"/>
    <property type="match status" value="1"/>
</dbReference>
<dbReference type="PIRSF" id="PIRSF005485">
    <property type="entry name" value="HrcA"/>
    <property type="match status" value="1"/>
</dbReference>
<dbReference type="SUPFAM" id="SSF55781">
    <property type="entry name" value="GAF domain-like"/>
    <property type="match status" value="1"/>
</dbReference>
<dbReference type="SUPFAM" id="SSF46785">
    <property type="entry name" value="Winged helix' DNA-binding domain"/>
    <property type="match status" value="1"/>
</dbReference>
<name>HRCA_STACT</name>